<name>GGTA1_HUMAN</name>
<organism>
    <name type="scientific">Homo sapiens</name>
    <name type="common">Human</name>
    <dbReference type="NCBI Taxonomy" id="9606"/>
    <lineage>
        <taxon>Eukaryota</taxon>
        <taxon>Metazoa</taxon>
        <taxon>Chordata</taxon>
        <taxon>Craniata</taxon>
        <taxon>Vertebrata</taxon>
        <taxon>Euteleostomi</taxon>
        <taxon>Mammalia</taxon>
        <taxon>Eutheria</taxon>
        <taxon>Euarchontoglires</taxon>
        <taxon>Primates</taxon>
        <taxon>Haplorrhini</taxon>
        <taxon>Catarrhini</taxon>
        <taxon>Hominidae</taxon>
        <taxon>Homo</taxon>
    </lineage>
</organism>
<reference key="1">
    <citation type="journal article" date="2002" name="Glycobiology">
        <title>A complete alpha1,3-galactosyltransferase gene is present in the human genome and partially transcribed.</title>
        <authorList>
            <person name="Lanteri M."/>
            <person name="Giordanengo V."/>
            <person name="Vidal F."/>
            <person name="Gaudray P."/>
            <person name="Lefebvre J.-C."/>
        </authorList>
    </citation>
    <scope>NUCLEOTIDE SEQUENCE [MRNA]</scope>
</reference>
<reference key="2">
    <citation type="journal article" date="2004" name="Nature">
        <title>DNA sequence and analysis of human chromosome 9.</title>
        <authorList>
            <person name="Humphray S.J."/>
            <person name="Oliver K."/>
            <person name="Hunt A.R."/>
            <person name="Plumb R.W."/>
            <person name="Loveland J.E."/>
            <person name="Howe K.L."/>
            <person name="Andrews T.D."/>
            <person name="Searle S."/>
            <person name="Hunt S.E."/>
            <person name="Scott C.E."/>
            <person name="Jones M.C."/>
            <person name="Ainscough R."/>
            <person name="Almeida J.P."/>
            <person name="Ambrose K.D."/>
            <person name="Ashwell R.I.S."/>
            <person name="Babbage A.K."/>
            <person name="Babbage S."/>
            <person name="Bagguley C.L."/>
            <person name="Bailey J."/>
            <person name="Banerjee R."/>
            <person name="Barker D.J."/>
            <person name="Barlow K.F."/>
            <person name="Bates K."/>
            <person name="Beasley H."/>
            <person name="Beasley O."/>
            <person name="Bird C.P."/>
            <person name="Bray-Allen S."/>
            <person name="Brown A.J."/>
            <person name="Brown J.Y."/>
            <person name="Burford D."/>
            <person name="Burrill W."/>
            <person name="Burton J."/>
            <person name="Carder C."/>
            <person name="Carter N.P."/>
            <person name="Chapman J.C."/>
            <person name="Chen Y."/>
            <person name="Clarke G."/>
            <person name="Clark S.Y."/>
            <person name="Clee C.M."/>
            <person name="Clegg S."/>
            <person name="Collier R.E."/>
            <person name="Corby N."/>
            <person name="Crosier M."/>
            <person name="Cummings A.T."/>
            <person name="Davies J."/>
            <person name="Dhami P."/>
            <person name="Dunn M."/>
            <person name="Dutta I."/>
            <person name="Dyer L.W."/>
            <person name="Earthrowl M.E."/>
            <person name="Faulkner L."/>
            <person name="Fleming C.J."/>
            <person name="Frankish A."/>
            <person name="Frankland J.A."/>
            <person name="French L."/>
            <person name="Fricker D.G."/>
            <person name="Garner P."/>
            <person name="Garnett J."/>
            <person name="Ghori J."/>
            <person name="Gilbert J.G.R."/>
            <person name="Glison C."/>
            <person name="Grafham D.V."/>
            <person name="Gribble S."/>
            <person name="Griffiths C."/>
            <person name="Griffiths-Jones S."/>
            <person name="Grocock R."/>
            <person name="Guy J."/>
            <person name="Hall R.E."/>
            <person name="Hammond S."/>
            <person name="Harley J.L."/>
            <person name="Harrison E.S.I."/>
            <person name="Hart E.A."/>
            <person name="Heath P.D."/>
            <person name="Henderson C.D."/>
            <person name="Hopkins B.L."/>
            <person name="Howard P.J."/>
            <person name="Howden P.J."/>
            <person name="Huckle E."/>
            <person name="Johnson C."/>
            <person name="Johnson D."/>
            <person name="Joy A.A."/>
            <person name="Kay M."/>
            <person name="Keenan S."/>
            <person name="Kershaw J.K."/>
            <person name="Kimberley A.M."/>
            <person name="King A."/>
            <person name="Knights A."/>
            <person name="Laird G.K."/>
            <person name="Langford C."/>
            <person name="Lawlor S."/>
            <person name="Leongamornlert D.A."/>
            <person name="Leversha M."/>
            <person name="Lloyd C."/>
            <person name="Lloyd D.M."/>
            <person name="Lovell J."/>
            <person name="Martin S."/>
            <person name="Mashreghi-Mohammadi M."/>
            <person name="Matthews L."/>
            <person name="McLaren S."/>
            <person name="McLay K.E."/>
            <person name="McMurray A."/>
            <person name="Milne S."/>
            <person name="Nickerson T."/>
            <person name="Nisbett J."/>
            <person name="Nordsiek G."/>
            <person name="Pearce A.V."/>
            <person name="Peck A.I."/>
            <person name="Porter K.M."/>
            <person name="Pandian R."/>
            <person name="Pelan S."/>
            <person name="Phillimore B."/>
            <person name="Povey S."/>
            <person name="Ramsey Y."/>
            <person name="Rand V."/>
            <person name="Scharfe M."/>
            <person name="Sehra H.K."/>
            <person name="Shownkeen R."/>
            <person name="Sims S.K."/>
            <person name="Skuce C.D."/>
            <person name="Smith M."/>
            <person name="Steward C.A."/>
            <person name="Swarbreck D."/>
            <person name="Sycamore N."/>
            <person name="Tester J."/>
            <person name="Thorpe A."/>
            <person name="Tracey A."/>
            <person name="Tromans A."/>
            <person name="Thomas D.W."/>
            <person name="Wall M."/>
            <person name="Wallis J.M."/>
            <person name="West A.P."/>
            <person name="Whitehead S.L."/>
            <person name="Willey D.L."/>
            <person name="Williams S.A."/>
            <person name="Wilming L."/>
            <person name="Wray P.W."/>
            <person name="Young L."/>
            <person name="Ashurst J.L."/>
            <person name="Coulson A."/>
            <person name="Blocker H."/>
            <person name="Durbin R.M."/>
            <person name="Sulston J.E."/>
            <person name="Hubbard T."/>
            <person name="Jackson M.J."/>
            <person name="Bentley D.R."/>
            <person name="Beck S."/>
            <person name="Rogers J."/>
            <person name="Dunham I."/>
        </authorList>
    </citation>
    <scope>NUCLEOTIDE SEQUENCE [LARGE SCALE GENOMIC DNA]</scope>
</reference>
<reference key="3">
    <citation type="journal article" date="2004" name="Genome Res.">
        <title>The status, quality, and expansion of the NIH full-length cDNA project: the Mammalian Gene Collection (MGC).</title>
        <authorList>
            <consortium name="The MGC Project Team"/>
        </authorList>
    </citation>
    <scope>NUCLEOTIDE SEQUENCE [LARGE SCALE MRNA]</scope>
    <source>
        <tissue>Brain</tissue>
    </source>
</reference>
<reference key="4">
    <citation type="journal article" date="2015" name="J. Mol. Evol.">
        <title>Significance of the evolutionary alpha1,3-galactosyltransferase (GGTA1) gene inactivation in preventing extinction of apes and old world monkeys.</title>
        <authorList>
            <person name="Galili U."/>
        </authorList>
    </citation>
    <scope>REVIEW</scope>
</reference>
<keyword id="KW-0333">Golgi apparatus</keyword>
<keyword id="KW-0472">Membrane</keyword>
<keyword id="KW-1267">Proteomics identification</keyword>
<keyword id="KW-1185">Reference proteome</keyword>
<keyword id="KW-0735">Signal-anchor</keyword>
<keyword id="KW-0812">Transmembrane</keyword>
<keyword id="KW-1133">Transmembrane helix</keyword>
<protein>
    <recommendedName>
        <fullName evidence="3">Inactive N-acetyllactosaminide alpha-1,3-galactosyltransferase</fullName>
    </recommendedName>
    <alternativeName>
        <fullName>Glycoprotein alpha-galactosyltransferase 1 pseudogene</fullName>
    </alternativeName>
</protein>
<accession>Q4G0N0</accession>
<accession>A2JVH9</accession>
<feature type="chain" id="PRO_0000333701" description="Inactive N-acetyllactosaminide alpha-1,3-galactosyltransferase">
    <location>
        <begin position="1"/>
        <end position="100"/>
    </location>
</feature>
<feature type="topological domain" description="Cytoplasmic" evidence="2">
    <location>
        <begin position="1"/>
        <end position="6"/>
    </location>
</feature>
<feature type="transmembrane region" description="Helical; Signal-anchor for type II membrane protein" evidence="2">
    <location>
        <begin position="7"/>
        <end position="27"/>
    </location>
</feature>
<feature type="topological domain" description="Lumenal" evidence="2">
    <location>
        <begin position="28"/>
        <end position="100"/>
    </location>
</feature>
<feature type="sequence conflict" description="In Ref. 3; BC045756." evidence="3" ref="3">
    <original>P</original>
    <variation>R</variation>
    <location>
        <position position="41"/>
    </location>
</feature>
<gene>
    <name evidence="6" type="primary">GGTA1</name>
    <name type="synonym">GGTA1P</name>
</gene>
<evidence type="ECO:0000250" key="1">
    <source>
        <dbReference type="UniProtKB" id="P23336"/>
    </source>
</evidence>
<evidence type="ECO:0000255" key="2"/>
<evidence type="ECO:0000305" key="3"/>
<evidence type="ECO:0000305" key="4">
    <source>
    </source>
</evidence>
<evidence type="ECO:0000305" key="5">
    <source>
    </source>
</evidence>
<evidence type="ECO:0000312" key="6">
    <source>
        <dbReference type="HGNC" id="HGNC:4253"/>
    </source>
</evidence>
<dbReference type="EMBL" id="AF305838">
    <property type="protein sequence ID" value="AAL09374.1"/>
    <property type="molecule type" value="mRNA"/>
</dbReference>
<dbReference type="EMBL" id="AL359644">
    <property type="status" value="NOT_ANNOTATED_CDS"/>
    <property type="molecule type" value="Genomic_DNA"/>
</dbReference>
<dbReference type="EMBL" id="BC045756">
    <property type="status" value="NOT_ANNOTATED_CDS"/>
    <property type="molecule type" value="mRNA"/>
</dbReference>
<dbReference type="CCDS" id="CCDS94476.1"/>
<dbReference type="RefSeq" id="NP_001369513.1">
    <property type="nucleotide sequence ID" value="NM_001382584.1"/>
</dbReference>
<dbReference type="RefSeq" id="NP_001369514.1">
    <property type="nucleotide sequence ID" value="NM_001382585.1"/>
</dbReference>
<dbReference type="RefSeq" id="NP_001369515.1">
    <property type="nucleotide sequence ID" value="NM_001382586.1"/>
</dbReference>
<dbReference type="RefSeq" id="NP_001369516.1">
    <property type="nucleotide sequence ID" value="NM_001382587.1"/>
</dbReference>
<dbReference type="IntAct" id="Q4G0N0">
    <property type="interactions" value="1"/>
</dbReference>
<dbReference type="BioMuta" id="HGNC:4253"/>
<dbReference type="MassIVE" id="Q4G0N0"/>
<dbReference type="PeptideAtlas" id="Q4G0N0"/>
<dbReference type="ProteomicsDB" id="62111"/>
<dbReference type="Ensembl" id="ENST00000373793.3">
    <property type="protein sequence ID" value="ENSP00000504423.1"/>
    <property type="gene ID" value="ENSG00000204136.12"/>
</dbReference>
<dbReference type="Ensembl" id="ENST00000481799.6">
    <property type="protein sequence ID" value="ENSP00000502991.1"/>
    <property type="gene ID" value="ENSG00000204136.12"/>
</dbReference>
<dbReference type="Ensembl" id="ENST00000495328.5">
    <property type="protein sequence ID" value="ENSP00000504776.1"/>
    <property type="gene ID" value="ENSG00000204136.12"/>
</dbReference>
<dbReference type="GeneID" id="2681"/>
<dbReference type="MANE-Select" id="ENST00000481799.6">
    <property type="protein sequence ID" value="ENSP00000502991.1"/>
    <property type="RefSeq nucleotide sequence ID" value="NM_001382585.1"/>
    <property type="RefSeq protein sequence ID" value="NP_001369514.1"/>
</dbReference>
<dbReference type="AGR" id="HGNC:4253"/>
<dbReference type="GeneCards" id="GGTA1"/>
<dbReference type="HGNC" id="HGNC:4253">
    <property type="gene designation" value="GGTA1"/>
</dbReference>
<dbReference type="HPA" id="ENSG00000204136">
    <property type="expression patterns" value="Tissue enhanced (salivary)"/>
</dbReference>
<dbReference type="MIM" id="104175">
    <property type="type" value="gene"/>
</dbReference>
<dbReference type="neXtProt" id="NX_Q4G0N0"/>
<dbReference type="OpenTargets" id="ENSG00000204136"/>
<dbReference type="VEuPathDB" id="HostDB:ENSG00000204136"/>
<dbReference type="GeneTree" id="ENSGT00410000028274"/>
<dbReference type="InParanoid" id="Q4G0N0"/>
<dbReference type="OMA" id="NDRTHYQ"/>
<dbReference type="OrthoDB" id="10352616at2759"/>
<dbReference type="PAN-GO" id="Q4G0N0">
    <property type="GO annotations" value="0 GO annotations based on evolutionary models"/>
</dbReference>
<dbReference type="PhylomeDB" id="Q4G0N0"/>
<dbReference type="BRENDA" id="2.4.1.87">
    <property type="organism ID" value="2681"/>
</dbReference>
<dbReference type="PathwayCommons" id="Q4G0N0"/>
<dbReference type="SignaLink" id="Q4G0N0"/>
<dbReference type="ChiTaRS" id="GGTA1P">
    <property type="organism name" value="human"/>
</dbReference>
<dbReference type="Pharos" id="Q4G0N0">
    <property type="development level" value="Tdark"/>
</dbReference>
<dbReference type="PRO" id="PR:Q4G0N0"/>
<dbReference type="Proteomes" id="UP000005640">
    <property type="component" value="Chromosome 9"/>
</dbReference>
<dbReference type="RNAct" id="Q4G0N0">
    <property type="molecule type" value="protein"/>
</dbReference>
<dbReference type="Bgee" id="ENSG00000204136">
    <property type="expression patterns" value="Expressed in parotid gland and 192 other cell types or tissues"/>
</dbReference>
<dbReference type="GO" id="GO:0031985">
    <property type="term" value="C:Golgi cisterna"/>
    <property type="evidence" value="ECO:0000250"/>
    <property type="project" value="UniProtKB"/>
</dbReference>
<dbReference type="GO" id="GO:0032580">
    <property type="term" value="C:Golgi cisterna membrane"/>
    <property type="evidence" value="ECO:0007669"/>
    <property type="project" value="UniProtKB-SubCell"/>
</dbReference>
<dbReference type="GO" id="GO:1901750">
    <property type="term" value="P:leukotriene D4 biosynthetic process"/>
    <property type="evidence" value="ECO:0000250"/>
    <property type="project" value="UniProtKB"/>
</dbReference>
<sequence>MNVKGKVILSMLVVSTVIIVFWEFINSTEGSFLWIYHSKNPEVDDSSAQKGWWFLSWFNNGIHNYQQGEEDIDKEKGREETKGRKMTQQSFGYGTGLIQT</sequence>
<comment type="subcellular location">
    <subcellularLocation>
        <location evidence="1">Golgi apparatus</location>
        <location evidence="1">Golgi stack membrane</location>
        <topology evidence="1">Single-pass type II membrane protein</topology>
    </subcellularLocation>
</comment>
<comment type="similarity">
    <text evidence="3">Belongs to the glycosyltransferase 6 family.</text>
</comment>
<comment type="caution">
    <text evidence="4 5">Could be the product of a pseudogene. According to PubMed:12499400, the human GGTA1 gene is an expressed pseudogene encoding non-functional truncated proteins containing the first four translated exons but missing the two catalytic exons. Although all exons expected to encode a functional GGTA1 of 371 residues are present in the human genome, all transcripts described encode truncated proteins that result from prematurely terminated transcription at the level of a strong transcriptional stop signal in the middle of intron 7. The premature transcriptional arrest of human GGTA1 gene leads to an ectopic splicing event and to the connection of a short intronic sequence downstream from translated exons. GGTA1 is active in marsupials, nonprimate placental mammals, lemurs and New World monkeys and synthesizes a carbohydrate antigen called 'alpha-gal epitope'. The alpha-gal epitope is present in large numbers on cell membrane glycolipids and glycoproteins. GGTA1 gene was inactivated in ancestral Old World monkeys and apes and, because of this, they lack alpha-gal epitopes and naturally produce an antibody called the 'anti-Gal antibody' which binds specifically to alpha-gal epitopes, is the most abundant antibody in humans and is responsible of rejection of mammalian xenografts.</text>
</comment>
<proteinExistence type="evidence at protein level"/>